<feature type="chain" id="PRO_1000214559" description="Large ribosomal subunit protein uL24">
    <location>
        <begin position="1"/>
        <end position="107"/>
    </location>
</feature>
<keyword id="KW-0687">Ribonucleoprotein</keyword>
<keyword id="KW-0689">Ribosomal protein</keyword>
<keyword id="KW-0694">RNA-binding</keyword>
<keyword id="KW-0699">rRNA-binding</keyword>
<dbReference type="EMBL" id="CP000916">
    <property type="protein sequence ID" value="ACM23180.1"/>
    <property type="molecule type" value="Genomic_DNA"/>
</dbReference>
<dbReference type="SMR" id="B9K897"/>
<dbReference type="STRING" id="309803.CTN_1004"/>
<dbReference type="KEGG" id="tna:CTN_1004"/>
<dbReference type="eggNOG" id="COG0198">
    <property type="taxonomic scope" value="Bacteria"/>
</dbReference>
<dbReference type="HOGENOM" id="CLU_093315_2_0_0"/>
<dbReference type="Proteomes" id="UP000000445">
    <property type="component" value="Chromosome"/>
</dbReference>
<dbReference type="GO" id="GO:1990904">
    <property type="term" value="C:ribonucleoprotein complex"/>
    <property type="evidence" value="ECO:0007669"/>
    <property type="project" value="UniProtKB-KW"/>
</dbReference>
<dbReference type="GO" id="GO:0005840">
    <property type="term" value="C:ribosome"/>
    <property type="evidence" value="ECO:0007669"/>
    <property type="project" value="UniProtKB-KW"/>
</dbReference>
<dbReference type="GO" id="GO:0019843">
    <property type="term" value="F:rRNA binding"/>
    <property type="evidence" value="ECO:0007669"/>
    <property type="project" value="UniProtKB-UniRule"/>
</dbReference>
<dbReference type="GO" id="GO:0003735">
    <property type="term" value="F:structural constituent of ribosome"/>
    <property type="evidence" value="ECO:0007669"/>
    <property type="project" value="InterPro"/>
</dbReference>
<dbReference type="GO" id="GO:0006412">
    <property type="term" value="P:translation"/>
    <property type="evidence" value="ECO:0007669"/>
    <property type="project" value="UniProtKB-UniRule"/>
</dbReference>
<dbReference type="CDD" id="cd06089">
    <property type="entry name" value="KOW_RPL26"/>
    <property type="match status" value="1"/>
</dbReference>
<dbReference type="FunFam" id="2.30.30.30:FF:000004">
    <property type="entry name" value="50S ribosomal protein L24"/>
    <property type="match status" value="1"/>
</dbReference>
<dbReference type="Gene3D" id="2.30.30.30">
    <property type="match status" value="1"/>
</dbReference>
<dbReference type="HAMAP" id="MF_01326_B">
    <property type="entry name" value="Ribosomal_uL24_B"/>
    <property type="match status" value="1"/>
</dbReference>
<dbReference type="InterPro" id="IPR005824">
    <property type="entry name" value="KOW"/>
</dbReference>
<dbReference type="InterPro" id="IPR014722">
    <property type="entry name" value="Rib_uL2_dom2"/>
</dbReference>
<dbReference type="InterPro" id="IPR003256">
    <property type="entry name" value="Ribosomal_uL24"/>
</dbReference>
<dbReference type="InterPro" id="IPR005825">
    <property type="entry name" value="Ribosomal_uL24_CS"/>
</dbReference>
<dbReference type="InterPro" id="IPR041988">
    <property type="entry name" value="Ribosomal_uL24_KOW"/>
</dbReference>
<dbReference type="InterPro" id="IPR008991">
    <property type="entry name" value="Translation_prot_SH3-like_sf"/>
</dbReference>
<dbReference type="NCBIfam" id="TIGR01079">
    <property type="entry name" value="rplX_bact"/>
    <property type="match status" value="1"/>
</dbReference>
<dbReference type="PANTHER" id="PTHR12903">
    <property type="entry name" value="MITOCHONDRIAL RIBOSOMAL PROTEIN L24"/>
    <property type="match status" value="1"/>
</dbReference>
<dbReference type="Pfam" id="PF00467">
    <property type="entry name" value="KOW"/>
    <property type="match status" value="1"/>
</dbReference>
<dbReference type="Pfam" id="PF17136">
    <property type="entry name" value="ribosomal_L24"/>
    <property type="match status" value="1"/>
</dbReference>
<dbReference type="SMART" id="SM00739">
    <property type="entry name" value="KOW"/>
    <property type="match status" value="1"/>
</dbReference>
<dbReference type="SUPFAM" id="SSF50104">
    <property type="entry name" value="Translation proteins SH3-like domain"/>
    <property type="match status" value="1"/>
</dbReference>
<dbReference type="PROSITE" id="PS01108">
    <property type="entry name" value="RIBOSOMAL_L24"/>
    <property type="match status" value="1"/>
</dbReference>
<comment type="function">
    <text evidence="1">One of two assembly initiator proteins, it binds directly to the 5'-end of the 23S rRNA, where it nucleates assembly of the 50S subunit.</text>
</comment>
<comment type="function">
    <text evidence="1">One of the proteins that surrounds the polypeptide exit tunnel on the outside of the subunit.</text>
</comment>
<comment type="subunit">
    <text evidence="1">Part of the 50S ribosomal subunit.</text>
</comment>
<comment type="similarity">
    <text evidence="1">Belongs to the universal ribosomal protein uL24 family.</text>
</comment>
<protein>
    <recommendedName>
        <fullName evidence="1">Large ribosomal subunit protein uL24</fullName>
    </recommendedName>
    <alternativeName>
        <fullName evidence="2">50S ribosomal protein L24</fullName>
    </alternativeName>
</protein>
<gene>
    <name evidence="1" type="primary">rplX</name>
    <name type="ordered locus">CTN_1004</name>
</gene>
<sequence length="107" mass="12285">MRMRIKKGDLVEVISGKDKGKRGKVLRVLPKEDKVIVEGVNMVKRHQRPIPQLREGGIIEREAPIYACKVMVVCPACDKRTRVGYRFTEDGKKVRYCKKCGEIIDKD</sequence>
<accession>B9K897</accession>
<reference key="1">
    <citation type="submission" date="2007-11" db="EMBL/GenBank/DDBJ databases">
        <title>The genome sequence of the hyperthermophilic bacterium Thermotoga neapolitana.</title>
        <authorList>
            <person name="Lim S.K."/>
            <person name="Kim J.S."/>
            <person name="Cha S.H."/>
            <person name="Park B.C."/>
            <person name="Lee D.S."/>
            <person name="Tae H.S."/>
            <person name="Kim S.-J."/>
            <person name="Kim J.J."/>
            <person name="Park K.J."/>
            <person name="Lee S.Y."/>
        </authorList>
    </citation>
    <scope>NUCLEOTIDE SEQUENCE [LARGE SCALE GENOMIC DNA]</scope>
    <source>
        <strain>ATCC 49049 / DSM 4359 / NBRC 107923 / NS-E</strain>
    </source>
</reference>
<proteinExistence type="inferred from homology"/>
<name>RL24_THENN</name>
<organism>
    <name type="scientific">Thermotoga neapolitana (strain ATCC 49049 / DSM 4359 / NBRC 107923 / NS-E)</name>
    <dbReference type="NCBI Taxonomy" id="309803"/>
    <lineage>
        <taxon>Bacteria</taxon>
        <taxon>Thermotogati</taxon>
        <taxon>Thermotogota</taxon>
        <taxon>Thermotogae</taxon>
        <taxon>Thermotogales</taxon>
        <taxon>Thermotogaceae</taxon>
        <taxon>Thermotoga</taxon>
    </lineage>
</organism>
<evidence type="ECO:0000255" key="1">
    <source>
        <dbReference type="HAMAP-Rule" id="MF_01326"/>
    </source>
</evidence>
<evidence type="ECO:0000305" key="2"/>